<comment type="function">
    <text evidence="1">The beta subunit is responsible for the synthesis of L-tryptophan from indole and L-serine.</text>
</comment>
<comment type="catalytic activity">
    <reaction evidence="1">
        <text>(1S,2R)-1-C-(indol-3-yl)glycerol 3-phosphate + L-serine = D-glyceraldehyde 3-phosphate + L-tryptophan + H2O</text>
        <dbReference type="Rhea" id="RHEA:10532"/>
        <dbReference type="ChEBI" id="CHEBI:15377"/>
        <dbReference type="ChEBI" id="CHEBI:33384"/>
        <dbReference type="ChEBI" id="CHEBI:57912"/>
        <dbReference type="ChEBI" id="CHEBI:58866"/>
        <dbReference type="ChEBI" id="CHEBI:59776"/>
        <dbReference type="EC" id="4.2.1.20"/>
    </reaction>
</comment>
<comment type="cofactor">
    <cofactor evidence="1">
        <name>pyridoxal 5'-phosphate</name>
        <dbReference type="ChEBI" id="CHEBI:597326"/>
    </cofactor>
</comment>
<comment type="pathway">
    <text evidence="1">Amino-acid biosynthesis; L-tryptophan biosynthesis; L-tryptophan from chorismate: step 5/5.</text>
</comment>
<comment type="subunit">
    <text evidence="1">Tetramer of two alpha and two beta chains.</text>
</comment>
<comment type="similarity">
    <text evidence="1">Belongs to the TrpB family.</text>
</comment>
<name>TRPB_CLOAB</name>
<evidence type="ECO:0000255" key="1">
    <source>
        <dbReference type="HAMAP-Rule" id="MF_00133"/>
    </source>
</evidence>
<organism>
    <name type="scientific">Clostridium acetobutylicum (strain ATCC 824 / DSM 792 / JCM 1419 / IAM 19013 / LMG 5710 / NBRC 13948 / NRRL B-527 / VKM B-1787 / 2291 / W)</name>
    <dbReference type="NCBI Taxonomy" id="272562"/>
    <lineage>
        <taxon>Bacteria</taxon>
        <taxon>Bacillati</taxon>
        <taxon>Bacillota</taxon>
        <taxon>Clostridia</taxon>
        <taxon>Eubacteriales</taxon>
        <taxon>Clostridiaceae</taxon>
        <taxon>Clostridium</taxon>
    </lineage>
</organism>
<reference key="1">
    <citation type="journal article" date="2001" name="J. Bacteriol.">
        <title>Genome sequence and comparative analysis of the solvent-producing bacterium Clostridium acetobutylicum.</title>
        <authorList>
            <person name="Noelling J."/>
            <person name="Breton G."/>
            <person name="Omelchenko M.V."/>
            <person name="Makarova K.S."/>
            <person name="Zeng Q."/>
            <person name="Gibson R."/>
            <person name="Lee H.M."/>
            <person name="Dubois J."/>
            <person name="Qiu D."/>
            <person name="Hitti J."/>
            <person name="Wolf Y.I."/>
            <person name="Tatusov R.L."/>
            <person name="Sabathe F."/>
            <person name="Doucette-Stamm L.A."/>
            <person name="Soucaille P."/>
            <person name="Daly M.J."/>
            <person name="Bennett G.N."/>
            <person name="Koonin E.V."/>
            <person name="Smith D.R."/>
        </authorList>
    </citation>
    <scope>NUCLEOTIDE SEQUENCE [LARGE SCALE GENOMIC DNA]</scope>
    <source>
        <strain>ATCC 824 / DSM 792 / JCM 1419 / IAM 19013 / LMG 5710 / NBRC 13948 / NRRL B-527 / VKM B-1787 / 2291 / W</strain>
    </source>
</reference>
<sequence length="394" mass="43134">MNGRFGKFGGQYVPETLMNAINELEVEFNKAINDEKFMMEYKYYLEKYVGRETPLYFAENMTKNLGGAKIYLKREDLNHTGSHKLNNALGQVLLAKRMGKKRVIAETGAGQHGVATATAAALFGLECEVFMGAEDVERQALNVFRMKILGAKVNSVKSGTNTLKDAINAAMRDWVTNIDNTYYVIGSVMGPHPYPTIVKDFQKIIGEEARKQILKAEGRLPDYVVACVGGGSNSMGIFYPFIKDEGVKLIGVEAAGLGIDTPMHAATLTKGSVGIIHGMMTYVLQDEDGQITPAYSVSAGLDYPGVGPQHSYLKEKERASYEAVTDKEALKAFLYLSEKEGIIPALESSHAVAYAMKLAPSLSKDEIVIINLSGRGDKDVNTVMKNMEENKNGK</sequence>
<accession>Q97EF5</accession>
<dbReference type="EC" id="4.2.1.20" evidence="1"/>
<dbReference type="EMBL" id="AE001437">
    <property type="protein sequence ID" value="AAK81095.1"/>
    <property type="molecule type" value="Genomic_DNA"/>
</dbReference>
<dbReference type="PIR" id="D97288">
    <property type="entry name" value="D97288"/>
</dbReference>
<dbReference type="RefSeq" id="NP_349755.1">
    <property type="nucleotide sequence ID" value="NC_003030.1"/>
</dbReference>
<dbReference type="RefSeq" id="WP_010966435.1">
    <property type="nucleotide sequence ID" value="NC_003030.1"/>
</dbReference>
<dbReference type="SMR" id="Q97EF5"/>
<dbReference type="STRING" id="272562.CA_C3158"/>
<dbReference type="GeneID" id="44999646"/>
<dbReference type="KEGG" id="cac:CA_C3158"/>
<dbReference type="PATRIC" id="fig|272562.8.peg.3339"/>
<dbReference type="eggNOG" id="COG0133">
    <property type="taxonomic scope" value="Bacteria"/>
</dbReference>
<dbReference type="HOGENOM" id="CLU_016734_3_1_9"/>
<dbReference type="OrthoDB" id="9766131at2"/>
<dbReference type="UniPathway" id="UPA00035">
    <property type="reaction ID" value="UER00044"/>
</dbReference>
<dbReference type="Proteomes" id="UP000000814">
    <property type="component" value="Chromosome"/>
</dbReference>
<dbReference type="GO" id="GO:0005737">
    <property type="term" value="C:cytoplasm"/>
    <property type="evidence" value="ECO:0007669"/>
    <property type="project" value="TreeGrafter"/>
</dbReference>
<dbReference type="GO" id="GO:0004834">
    <property type="term" value="F:tryptophan synthase activity"/>
    <property type="evidence" value="ECO:0007669"/>
    <property type="project" value="UniProtKB-UniRule"/>
</dbReference>
<dbReference type="CDD" id="cd06446">
    <property type="entry name" value="Trp-synth_B"/>
    <property type="match status" value="1"/>
</dbReference>
<dbReference type="FunFam" id="3.40.50.1100:FF:000001">
    <property type="entry name" value="Tryptophan synthase beta chain"/>
    <property type="match status" value="1"/>
</dbReference>
<dbReference type="FunFam" id="3.40.50.1100:FF:000004">
    <property type="entry name" value="Tryptophan synthase beta chain"/>
    <property type="match status" value="1"/>
</dbReference>
<dbReference type="Gene3D" id="3.40.50.1100">
    <property type="match status" value="2"/>
</dbReference>
<dbReference type="HAMAP" id="MF_00133">
    <property type="entry name" value="Trp_synth_beta"/>
    <property type="match status" value="1"/>
</dbReference>
<dbReference type="InterPro" id="IPR006653">
    <property type="entry name" value="Trp_synth_b_CS"/>
</dbReference>
<dbReference type="InterPro" id="IPR006654">
    <property type="entry name" value="Trp_synth_beta"/>
</dbReference>
<dbReference type="InterPro" id="IPR023026">
    <property type="entry name" value="Trp_synth_beta/beta-like"/>
</dbReference>
<dbReference type="InterPro" id="IPR001926">
    <property type="entry name" value="TrpB-like_PALP"/>
</dbReference>
<dbReference type="InterPro" id="IPR036052">
    <property type="entry name" value="TrpB-like_PALP_sf"/>
</dbReference>
<dbReference type="NCBIfam" id="TIGR00263">
    <property type="entry name" value="trpB"/>
    <property type="match status" value="1"/>
</dbReference>
<dbReference type="PANTHER" id="PTHR48077:SF3">
    <property type="entry name" value="TRYPTOPHAN SYNTHASE"/>
    <property type="match status" value="1"/>
</dbReference>
<dbReference type="PANTHER" id="PTHR48077">
    <property type="entry name" value="TRYPTOPHAN SYNTHASE-RELATED"/>
    <property type="match status" value="1"/>
</dbReference>
<dbReference type="Pfam" id="PF00291">
    <property type="entry name" value="PALP"/>
    <property type="match status" value="1"/>
</dbReference>
<dbReference type="PIRSF" id="PIRSF001413">
    <property type="entry name" value="Trp_syn_beta"/>
    <property type="match status" value="1"/>
</dbReference>
<dbReference type="SUPFAM" id="SSF53686">
    <property type="entry name" value="Tryptophan synthase beta subunit-like PLP-dependent enzymes"/>
    <property type="match status" value="1"/>
</dbReference>
<dbReference type="PROSITE" id="PS00168">
    <property type="entry name" value="TRP_SYNTHASE_BETA"/>
    <property type="match status" value="1"/>
</dbReference>
<feature type="chain" id="PRO_0000098943" description="Tryptophan synthase beta chain">
    <location>
        <begin position="1"/>
        <end position="394"/>
    </location>
</feature>
<feature type="modified residue" description="N6-(pyridoxal phosphate)lysine" evidence="1">
    <location>
        <position position="84"/>
    </location>
</feature>
<gene>
    <name evidence="1" type="primary">trpB</name>
    <name type="ordered locus">CA_C3158</name>
</gene>
<proteinExistence type="inferred from homology"/>
<keyword id="KW-0028">Amino-acid biosynthesis</keyword>
<keyword id="KW-0057">Aromatic amino acid biosynthesis</keyword>
<keyword id="KW-0456">Lyase</keyword>
<keyword id="KW-0663">Pyridoxal phosphate</keyword>
<keyword id="KW-1185">Reference proteome</keyword>
<keyword id="KW-0822">Tryptophan biosynthesis</keyword>
<protein>
    <recommendedName>
        <fullName evidence="1">Tryptophan synthase beta chain</fullName>
        <ecNumber evidence="1">4.2.1.20</ecNumber>
    </recommendedName>
</protein>